<comment type="function">
    <text evidence="1">Catalyzes the conversion of acetate into acetyl-CoA (AcCoA), an essential intermediate at the junction of anabolic and catabolic pathways. Acs undergoes a two-step reaction. In the first half reaction, Acs combines acetate with ATP to form acetyl-adenylate (AcAMP) intermediate. In the second half reaction, it can then transfer the acetyl group from AcAMP to the sulfhydryl group of CoA, forming the product AcCoA.</text>
</comment>
<comment type="function">
    <text evidence="1">Enables the cell to use acetate during aerobic growth to generate energy via the TCA cycle, and biosynthetic compounds via the glyoxylate shunt. Acetylates CheY, the response regulator involved in flagellar movement and chemotaxis.</text>
</comment>
<comment type="catalytic activity">
    <reaction evidence="1">
        <text>acetate + ATP + CoA = acetyl-CoA + AMP + diphosphate</text>
        <dbReference type="Rhea" id="RHEA:23176"/>
        <dbReference type="ChEBI" id="CHEBI:30089"/>
        <dbReference type="ChEBI" id="CHEBI:30616"/>
        <dbReference type="ChEBI" id="CHEBI:33019"/>
        <dbReference type="ChEBI" id="CHEBI:57287"/>
        <dbReference type="ChEBI" id="CHEBI:57288"/>
        <dbReference type="ChEBI" id="CHEBI:456215"/>
        <dbReference type="EC" id="6.2.1.1"/>
    </reaction>
</comment>
<comment type="cofactor">
    <cofactor evidence="1">
        <name>Mg(2+)</name>
        <dbReference type="ChEBI" id="CHEBI:18420"/>
    </cofactor>
</comment>
<comment type="PTM">
    <text evidence="1">Acetylated. Deacetylation by the SIR2-homolog deacetylase activates the enzyme.</text>
</comment>
<comment type="similarity">
    <text evidence="1">Belongs to the ATP-dependent AMP-binding enzyme family.</text>
</comment>
<keyword id="KW-0007">Acetylation</keyword>
<keyword id="KW-0067">ATP-binding</keyword>
<keyword id="KW-0436">Ligase</keyword>
<keyword id="KW-0460">Magnesium</keyword>
<keyword id="KW-0479">Metal-binding</keyword>
<keyword id="KW-0547">Nucleotide-binding</keyword>
<keyword id="KW-1185">Reference proteome</keyword>
<sequence>MSQIHKHPIPAAIAERCLITPEQYDAKYQQSVHDPDAFWGEQGKILDWITPYQTVKNTSFAPGNVSIKWYEDGTLNLAANCLDRHLSERGDQTAIIWEGDDATQSKHISYRELHRDVCRFANTLTSLGIKKGDVVAIYMPMVPEAAVAMLACARIGAVHSVIFGGFSPEAVAGRIIDSSARLVITADEGVRAGRAIPLKKNVDDALKNPGVTSVEHVVVFKRTGGNIEWHEGRDLWWSELVKKASAHHQPVEMNAEDPLFILYTSGSTGKPKGVLHTTGGYLVYAATTFLYAFDYHPGDIYWCTADVGWVTGHSYLLYGPLACGATTLMFEGVPNWPSANRMAQVVDKHKVNILYTAPTAIRALMAEGDKAIDGTDRSSLRILGSVGEPINPEAWEWYWKKIGNEKCPVIDTWWQTETGGFMITPLPGATELKAGSATRPFFGVQPALVDNEGNPQQGATEGNLVITDSWPGQARTLFGDHERFEQTYFSTFKNMYFSGDGARRDEDGYYWITGRVDDVLNVSGHRLGTAEIESALVSHPKIAEAAVVGIPHSIKGQAIYAYVTLNHGEEPSAELYSEVRNWVRKEIGPLATPDVLHWTDSLPKTRSGKIMRRILRKIAAGDTSNLGDTSTLADPGVVEKLLEEKQSIAMPS</sequence>
<organism>
    <name type="scientific">Cronobacter sakazakii (strain ATCC BAA-894)</name>
    <name type="common">Enterobacter sakazakii</name>
    <dbReference type="NCBI Taxonomy" id="290339"/>
    <lineage>
        <taxon>Bacteria</taxon>
        <taxon>Pseudomonadati</taxon>
        <taxon>Pseudomonadota</taxon>
        <taxon>Gammaproteobacteria</taxon>
        <taxon>Enterobacterales</taxon>
        <taxon>Enterobacteriaceae</taxon>
        <taxon>Cronobacter</taxon>
    </lineage>
</organism>
<reference key="1">
    <citation type="journal article" date="2010" name="PLoS ONE">
        <title>Genome sequence of Cronobacter sakazakii BAA-894 and comparative genomic hybridization analysis with other Cronobacter species.</title>
        <authorList>
            <person name="Kucerova E."/>
            <person name="Clifton S.W."/>
            <person name="Xia X.Q."/>
            <person name="Long F."/>
            <person name="Porwollik S."/>
            <person name="Fulton L."/>
            <person name="Fronick C."/>
            <person name="Minx P."/>
            <person name="Kyung K."/>
            <person name="Warren W."/>
            <person name="Fulton R."/>
            <person name="Feng D."/>
            <person name="Wollam A."/>
            <person name="Shah N."/>
            <person name="Bhonagiri V."/>
            <person name="Nash W.E."/>
            <person name="Hallsworth-Pepin K."/>
            <person name="Wilson R.K."/>
            <person name="McClelland M."/>
            <person name="Forsythe S.J."/>
        </authorList>
    </citation>
    <scope>NUCLEOTIDE SEQUENCE [LARGE SCALE GENOMIC DNA]</scope>
    <source>
        <strain>ATCC BAA-894</strain>
    </source>
</reference>
<accession>A7MPJ7</accession>
<evidence type="ECO:0000255" key="1">
    <source>
        <dbReference type="HAMAP-Rule" id="MF_01123"/>
    </source>
</evidence>
<feature type="chain" id="PRO_1000065290" description="Acetyl-coenzyme A synthetase">
    <location>
        <begin position="1"/>
        <end position="652"/>
    </location>
</feature>
<feature type="binding site" evidence="1">
    <location>
        <begin position="191"/>
        <end position="194"/>
    </location>
    <ligand>
        <name>CoA</name>
        <dbReference type="ChEBI" id="CHEBI:57287"/>
    </ligand>
</feature>
<feature type="binding site" evidence="1">
    <location>
        <position position="311"/>
    </location>
    <ligand>
        <name>CoA</name>
        <dbReference type="ChEBI" id="CHEBI:57287"/>
    </ligand>
</feature>
<feature type="binding site" evidence="1">
    <location>
        <position position="335"/>
    </location>
    <ligand>
        <name>CoA</name>
        <dbReference type="ChEBI" id="CHEBI:57287"/>
    </ligand>
</feature>
<feature type="binding site" evidence="1">
    <location>
        <begin position="387"/>
        <end position="389"/>
    </location>
    <ligand>
        <name>ATP</name>
        <dbReference type="ChEBI" id="CHEBI:30616"/>
    </ligand>
</feature>
<feature type="binding site" evidence="1">
    <location>
        <begin position="411"/>
        <end position="416"/>
    </location>
    <ligand>
        <name>ATP</name>
        <dbReference type="ChEBI" id="CHEBI:30616"/>
    </ligand>
</feature>
<feature type="binding site" evidence="1">
    <location>
        <position position="500"/>
    </location>
    <ligand>
        <name>ATP</name>
        <dbReference type="ChEBI" id="CHEBI:30616"/>
    </ligand>
</feature>
<feature type="binding site" evidence="1">
    <location>
        <position position="515"/>
    </location>
    <ligand>
        <name>ATP</name>
        <dbReference type="ChEBI" id="CHEBI:30616"/>
    </ligand>
</feature>
<feature type="binding site" evidence="1">
    <location>
        <position position="523"/>
    </location>
    <ligand>
        <name>CoA</name>
        <dbReference type="ChEBI" id="CHEBI:57287"/>
    </ligand>
</feature>
<feature type="binding site" evidence="1">
    <location>
        <position position="526"/>
    </location>
    <ligand>
        <name>ATP</name>
        <dbReference type="ChEBI" id="CHEBI:30616"/>
    </ligand>
</feature>
<feature type="binding site" evidence="1">
    <location>
        <position position="537"/>
    </location>
    <ligand>
        <name>Mg(2+)</name>
        <dbReference type="ChEBI" id="CHEBI:18420"/>
    </ligand>
</feature>
<feature type="binding site" evidence="1">
    <location>
        <position position="539"/>
    </location>
    <ligand>
        <name>Mg(2+)</name>
        <dbReference type="ChEBI" id="CHEBI:18420"/>
    </ligand>
</feature>
<feature type="binding site" evidence="1">
    <location>
        <position position="542"/>
    </location>
    <ligand>
        <name>Mg(2+)</name>
        <dbReference type="ChEBI" id="CHEBI:18420"/>
    </ligand>
</feature>
<feature type="binding site" evidence="1">
    <location>
        <position position="584"/>
    </location>
    <ligand>
        <name>CoA</name>
        <dbReference type="ChEBI" id="CHEBI:57287"/>
    </ligand>
</feature>
<feature type="modified residue" description="N6-acetyllysine" evidence="1">
    <location>
        <position position="609"/>
    </location>
</feature>
<dbReference type="EC" id="6.2.1.1" evidence="1"/>
<dbReference type="EMBL" id="CP000783">
    <property type="protein sequence ID" value="ABU75427.1"/>
    <property type="molecule type" value="Genomic_DNA"/>
</dbReference>
<dbReference type="RefSeq" id="WP_012123641.1">
    <property type="nucleotide sequence ID" value="NC_009778.1"/>
</dbReference>
<dbReference type="SMR" id="A7MPJ7"/>
<dbReference type="KEGG" id="esa:ESA_00122"/>
<dbReference type="PATRIC" id="fig|290339.8.peg.109"/>
<dbReference type="HOGENOM" id="CLU_000022_3_6_6"/>
<dbReference type="Proteomes" id="UP000000260">
    <property type="component" value="Chromosome"/>
</dbReference>
<dbReference type="GO" id="GO:0005829">
    <property type="term" value="C:cytosol"/>
    <property type="evidence" value="ECO:0007669"/>
    <property type="project" value="TreeGrafter"/>
</dbReference>
<dbReference type="GO" id="GO:0003987">
    <property type="term" value="F:acetate-CoA ligase activity"/>
    <property type="evidence" value="ECO:0007669"/>
    <property type="project" value="UniProtKB-UniRule"/>
</dbReference>
<dbReference type="GO" id="GO:0016208">
    <property type="term" value="F:AMP binding"/>
    <property type="evidence" value="ECO:0007669"/>
    <property type="project" value="InterPro"/>
</dbReference>
<dbReference type="GO" id="GO:0005524">
    <property type="term" value="F:ATP binding"/>
    <property type="evidence" value="ECO:0007669"/>
    <property type="project" value="UniProtKB-KW"/>
</dbReference>
<dbReference type="GO" id="GO:0046872">
    <property type="term" value="F:metal ion binding"/>
    <property type="evidence" value="ECO:0007669"/>
    <property type="project" value="UniProtKB-KW"/>
</dbReference>
<dbReference type="GO" id="GO:0019427">
    <property type="term" value="P:acetyl-CoA biosynthetic process from acetate"/>
    <property type="evidence" value="ECO:0007669"/>
    <property type="project" value="UniProtKB-UniRule"/>
</dbReference>
<dbReference type="GO" id="GO:0006935">
    <property type="term" value="P:chemotaxis"/>
    <property type="evidence" value="ECO:0007669"/>
    <property type="project" value="UniProtKB-UniRule"/>
</dbReference>
<dbReference type="CDD" id="cd05966">
    <property type="entry name" value="ACS"/>
    <property type="match status" value="1"/>
</dbReference>
<dbReference type="FunFam" id="3.30.300.30:FF:000004">
    <property type="entry name" value="Acetyl-coenzyme A synthetase"/>
    <property type="match status" value="1"/>
</dbReference>
<dbReference type="FunFam" id="3.40.50.12780:FF:000001">
    <property type="entry name" value="Acetyl-coenzyme A synthetase"/>
    <property type="match status" value="1"/>
</dbReference>
<dbReference type="Gene3D" id="3.30.300.30">
    <property type="match status" value="1"/>
</dbReference>
<dbReference type="Gene3D" id="3.40.50.12780">
    <property type="entry name" value="N-terminal domain of ligase-like"/>
    <property type="match status" value="1"/>
</dbReference>
<dbReference type="HAMAP" id="MF_01123">
    <property type="entry name" value="Ac_CoA_synth"/>
    <property type="match status" value="1"/>
</dbReference>
<dbReference type="InterPro" id="IPR011904">
    <property type="entry name" value="Ac_CoA_lig"/>
</dbReference>
<dbReference type="InterPro" id="IPR032387">
    <property type="entry name" value="ACAS_N"/>
</dbReference>
<dbReference type="InterPro" id="IPR025110">
    <property type="entry name" value="AMP-bd_C"/>
</dbReference>
<dbReference type="InterPro" id="IPR045851">
    <property type="entry name" value="AMP-bd_C_sf"/>
</dbReference>
<dbReference type="InterPro" id="IPR020845">
    <property type="entry name" value="AMP-binding_CS"/>
</dbReference>
<dbReference type="InterPro" id="IPR000873">
    <property type="entry name" value="AMP-dep_synth/lig_dom"/>
</dbReference>
<dbReference type="InterPro" id="IPR042099">
    <property type="entry name" value="ANL_N_sf"/>
</dbReference>
<dbReference type="NCBIfam" id="TIGR02188">
    <property type="entry name" value="Ac_CoA_lig_AcsA"/>
    <property type="match status" value="1"/>
</dbReference>
<dbReference type="NCBIfam" id="NF001208">
    <property type="entry name" value="PRK00174.1"/>
    <property type="match status" value="1"/>
</dbReference>
<dbReference type="PANTHER" id="PTHR24095">
    <property type="entry name" value="ACETYL-COENZYME A SYNTHETASE"/>
    <property type="match status" value="1"/>
</dbReference>
<dbReference type="PANTHER" id="PTHR24095:SF243">
    <property type="entry name" value="ACETYL-COENZYME A SYNTHETASE"/>
    <property type="match status" value="1"/>
</dbReference>
<dbReference type="Pfam" id="PF16177">
    <property type="entry name" value="ACAS_N"/>
    <property type="match status" value="1"/>
</dbReference>
<dbReference type="Pfam" id="PF00501">
    <property type="entry name" value="AMP-binding"/>
    <property type="match status" value="1"/>
</dbReference>
<dbReference type="Pfam" id="PF13193">
    <property type="entry name" value="AMP-binding_C"/>
    <property type="match status" value="1"/>
</dbReference>
<dbReference type="SUPFAM" id="SSF56801">
    <property type="entry name" value="Acetyl-CoA synthetase-like"/>
    <property type="match status" value="1"/>
</dbReference>
<dbReference type="PROSITE" id="PS00455">
    <property type="entry name" value="AMP_BINDING"/>
    <property type="match status" value="1"/>
</dbReference>
<protein>
    <recommendedName>
        <fullName evidence="1">Acetyl-coenzyme A synthetase</fullName>
        <shortName evidence="1">AcCoA synthetase</shortName>
        <shortName evidence="1">Acs</shortName>
        <ecNumber evidence="1">6.2.1.1</ecNumber>
    </recommendedName>
    <alternativeName>
        <fullName evidence="1">Acetate--CoA ligase</fullName>
    </alternativeName>
    <alternativeName>
        <fullName evidence="1">Acyl-activating enzyme</fullName>
    </alternativeName>
</protein>
<proteinExistence type="inferred from homology"/>
<gene>
    <name evidence="1" type="primary">acs</name>
    <name type="ordered locus">ESA_00122</name>
</gene>
<name>ACSA_CROS8</name>